<dbReference type="EMBL" id="CP000821">
    <property type="protein sequence ID" value="ABV37934.1"/>
    <property type="molecule type" value="Genomic_DNA"/>
</dbReference>
<dbReference type="RefSeq" id="WP_012143664.1">
    <property type="nucleotide sequence ID" value="NC_009831.1"/>
</dbReference>
<dbReference type="SMR" id="A8FYL1"/>
<dbReference type="STRING" id="425104.Ssed_3330"/>
<dbReference type="KEGG" id="sse:Ssed_3330"/>
<dbReference type="eggNOG" id="COG0576">
    <property type="taxonomic scope" value="Bacteria"/>
</dbReference>
<dbReference type="HOGENOM" id="CLU_057217_6_0_6"/>
<dbReference type="OrthoDB" id="9789811at2"/>
<dbReference type="Proteomes" id="UP000002015">
    <property type="component" value="Chromosome"/>
</dbReference>
<dbReference type="GO" id="GO:0005829">
    <property type="term" value="C:cytosol"/>
    <property type="evidence" value="ECO:0007669"/>
    <property type="project" value="TreeGrafter"/>
</dbReference>
<dbReference type="GO" id="GO:0000774">
    <property type="term" value="F:adenyl-nucleotide exchange factor activity"/>
    <property type="evidence" value="ECO:0007669"/>
    <property type="project" value="InterPro"/>
</dbReference>
<dbReference type="GO" id="GO:0042803">
    <property type="term" value="F:protein homodimerization activity"/>
    <property type="evidence" value="ECO:0007669"/>
    <property type="project" value="InterPro"/>
</dbReference>
<dbReference type="GO" id="GO:0051087">
    <property type="term" value="F:protein-folding chaperone binding"/>
    <property type="evidence" value="ECO:0007669"/>
    <property type="project" value="InterPro"/>
</dbReference>
<dbReference type="GO" id="GO:0051082">
    <property type="term" value="F:unfolded protein binding"/>
    <property type="evidence" value="ECO:0007669"/>
    <property type="project" value="TreeGrafter"/>
</dbReference>
<dbReference type="GO" id="GO:0006457">
    <property type="term" value="P:protein folding"/>
    <property type="evidence" value="ECO:0007669"/>
    <property type="project" value="InterPro"/>
</dbReference>
<dbReference type="CDD" id="cd00446">
    <property type="entry name" value="GrpE"/>
    <property type="match status" value="1"/>
</dbReference>
<dbReference type="FunFam" id="2.30.22.10:FF:000001">
    <property type="entry name" value="Protein GrpE"/>
    <property type="match status" value="1"/>
</dbReference>
<dbReference type="Gene3D" id="3.90.20.20">
    <property type="match status" value="1"/>
</dbReference>
<dbReference type="Gene3D" id="2.30.22.10">
    <property type="entry name" value="Head domain of nucleotide exchange factor GrpE"/>
    <property type="match status" value="1"/>
</dbReference>
<dbReference type="HAMAP" id="MF_01151">
    <property type="entry name" value="GrpE"/>
    <property type="match status" value="1"/>
</dbReference>
<dbReference type="InterPro" id="IPR000740">
    <property type="entry name" value="GrpE"/>
</dbReference>
<dbReference type="InterPro" id="IPR013805">
    <property type="entry name" value="GrpE_coiled_coil"/>
</dbReference>
<dbReference type="InterPro" id="IPR009012">
    <property type="entry name" value="GrpE_head"/>
</dbReference>
<dbReference type="NCBIfam" id="NF010737">
    <property type="entry name" value="PRK14139.1"/>
    <property type="match status" value="1"/>
</dbReference>
<dbReference type="NCBIfam" id="NF010738">
    <property type="entry name" value="PRK14140.1"/>
    <property type="match status" value="1"/>
</dbReference>
<dbReference type="NCBIfam" id="NF010748">
    <property type="entry name" value="PRK14150.1"/>
    <property type="match status" value="1"/>
</dbReference>
<dbReference type="PANTHER" id="PTHR21237">
    <property type="entry name" value="GRPE PROTEIN"/>
    <property type="match status" value="1"/>
</dbReference>
<dbReference type="PANTHER" id="PTHR21237:SF23">
    <property type="entry name" value="GRPE PROTEIN HOMOLOG, MITOCHONDRIAL"/>
    <property type="match status" value="1"/>
</dbReference>
<dbReference type="Pfam" id="PF01025">
    <property type="entry name" value="GrpE"/>
    <property type="match status" value="1"/>
</dbReference>
<dbReference type="PRINTS" id="PR00773">
    <property type="entry name" value="GRPEPROTEIN"/>
</dbReference>
<dbReference type="SUPFAM" id="SSF58014">
    <property type="entry name" value="Coiled-coil domain of nucleotide exchange factor GrpE"/>
    <property type="match status" value="1"/>
</dbReference>
<dbReference type="SUPFAM" id="SSF51064">
    <property type="entry name" value="Head domain of nucleotide exchange factor GrpE"/>
    <property type="match status" value="1"/>
</dbReference>
<dbReference type="PROSITE" id="PS01071">
    <property type="entry name" value="GRPE"/>
    <property type="match status" value="1"/>
</dbReference>
<feature type="chain" id="PRO_1000085125" description="Protein GrpE">
    <location>
        <begin position="1"/>
        <end position="209"/>
    </location>
</feature>
<feature type="region of interest" description="Disordered" evidence="2">
    <location>
        <begin position="1"/>
        <end position="27"/>
    </location>
</feature>
<feature type="compositionally biased region" description="Polar residues" evidence="2">
    <location>
        <begin position="1"/>
        <end position="13"/>
    </location>
</feature>
<feature type="compositionally biased region" description="Acidic residues" evidence="2">
    <location>
        <begin position="15"/>
        <end position="27"/>
    </location>
</feature>
<reference key="1">
    <citation type="submission" date="2007-08" db="EMBL/GenBank/DDBJ databases">
        <title>Complete sequence of Shewanella sediminis HAW-EB3.</title>
        <authorList>
            <consortium name="US DOE Joint Genome Institute"/>
            <person name="Copeland A."/>
            <person name="Lucas S."/>
            <person name="Lapidus A."/>
            <person name="Barry K."/>
            <person name="Glavina del Rio T."/>
            <person name="Dalin E."/>
            <person name="Tice H."/>
            <person name="Pitluck S."/>
            <person name="Chertkov O."/>
            <person name="Brettin T."/>
            <person name="Bruce D."/>
            <person name="Detter J.C."/>
            <person name="Han C."/>
            <person name="Schmutz J."/>
            <person name="Larimer F."/>
            <person name="Land M."/>
            <person name="Hauser L."/>
            <person name="Kyrpides N."/>
            <person name="Kim E."/>
            <person name="Zhao J.-S."/>
            <person name="Richardson P."/>
        </authorList>
    </citation>
    <scope>NUCLEOTIDE SEQUENCE [LARGE SCALE GENOMIC DNA]</scope>
    <source>
        <strain>HAW-EB3</strain>
    </source>
</reference>
<keyword id="KW-0143">Chaperone</keyword>
<keyword id="KW-0963">Cytoplasm</keyword>
<keyword id="KW-1185">Reference proteome</keyword>
<keyword id="KW-0346">Stress response</keyword>
<gene>
    <name evidence="1" type="primary">grpE</name>
    <name type="ordered locus">Ssed_3330</name>
</gene>
<name>GRPE_SHESH</name>
<proteinExistence type="inferred from homology"/>
<evidence type="ECO:0000255" key="1">
    <source>
        <dbReference type="HAMAP-Rule" id="MF_01151"/>
    </source>
</evidence>
<evidence type="ECO:0000256" key="2">
    <source>
        <dbReference type="SAM" id="MobiDB-lite"/>
    </source>
</evidence>
<comment type="function">
    <text evidence="1">Participates actively in the response to hyperosmotic and heat shock by preventing the aggregation of stress-denatured proteins, in association with DnaK and GrpE. It is the nucleotide exchange factor for DnaK and may function as a thermosensor. Unfolded proteins bind initially to DnaJ; upon interaction with the DnaJ-bound protein, DnaK hydrolyzes its bound ATP, resulting in the formation of a stable complex. GrpE releases ADP from DnaK; ATP binding to DnaK triggers the release of the substrate protein, thus completing the reaction cycle. Several rounds of ATP-dependent interactions between DnaJ, DnaK and GrpE are required for fully efficient folding.</text>
</comment>
<comment type="subunit">
    <text evidence="1">Homodimer.</text>
</comment>
<comment type="subcellular location">
    <subcellularLocation>
        <location evidence="1">Cytoplasm</location>
    </subcellularLocation>
</comment>
<comment type="similarity">
    <text evidence="1">Belongs to the GrpE family.</text>
</comment>
<accession>A8FYL1</accession>
<organism>
    <name type="scientific">Shewanella sediminis (strain HAW-EB3)</name>
    <dbReference type="NCBI Taxonomy" id="425104"/>
    <lineage>
        <taxon>Bacteria</taxon>
        <taxon>Pseudomonadati</taxon>
        <taxon>Pseudomonadota</taxon>
        <taxon>Gammaproteobacteria</taxon>
        <taxon>Alteromonadales</taxon>
        <taxon>Shewanellaceae</taxon>
        <taxon>Shewanella</taxon>
    </lineage>
</organism>
<protein>
    <recommendedName>
        <fullName evidence="1">Protein GrpE</fullName>
    </recommendedName>
    <alternativeName>
        <fullName evidence="1">HSP-70 cofactor</fullName>
    </alternativeName>
</protein>
<sequence length="209" mass="22885">MSNDSSKAKQNQVDEAVEGEIITDNENETVTGEASLMDELTQANFRVEELEQALEAATAKVDEQKDSVIRAAAEVDNIRRRAAIDVEKARKFALEKFANELLPVIDNMERALQGTDAEAEATKAVYEGVELTLKSFIGTVEKFGLTVVNPQGETFNPEHHQAIGMQPSPDFPANTVMMVMQKGYILNERLLRPAMVMVSQGGAAVDTQA</sequence>